<gene>
    <name type="primary">rpl21e</name>
    <name type="ordered locus">Ta1297</name>
</gene>
<organism>
    <name type="scientific">Thermoplasma acidophilum (strain ATCC 25905 / DSM 1728 / JCM 9062 / NBRC 15155 / AMRC-C165)</name>
    <dbReference type="NCBI Taxonomy" id="273075"/>
    <lineage>
        <taxon>Archaea</taxon>
        <taxon>Methanobacteriati</taxon>
        <taxon>Thermoplasmatota</taxon>
        <taxon>Thermoplasmata</taxon>
        <taxon>Thermoplasmatales</taxon>
        <taxon>Thermoplasmataceae</taxon>
        <taxon>Thermoplasma</taxon>
    </lineage>
</organism>
<proteinExistence type="inferred from homology"/>
<evidence type="ECO:0000256" key="1">
    <source>
        <dbReference type="SAM" id="MobiDB-lite"/>
    </source>
</evidence>
<evidence type="ECO:0000305" key="2"/>
<feature type="chain" id="PRO_0000149704" description="Large ribosomal subunit protein eL21">
    <location>
        <begin position="1"/>
        <end position="98"/>
    </location>
</feature>
<feature type="region of interest" description="Disordered" evidence="1">
    <location>
        <begin position="1"/>
        <end position="24"/>
    </location>
</feature>
<keyword id="KW-1185">Reference proteome</keyword>
<keyword id="KW-0687">Ribonucleoprotein</keyword>
<keyword id="KW-0689">Ribosomal protein</keyword>
<dbReference type="EMBL" id="AL445067">
    <property type="protein sequence ID" value="CAC12419.1"/>
    <property type="molecule type" value="Genomic_DNA"/>
</dbReference>
<dbReference type="RefSeq" id="WP_010901703.1">
    <property type="nucleotide sequence ID" value="NC_002578.1"/>
</dbReference>
<dbReference type="SMR" id="Q9HIN8"/>
<dbReference type="FunCoup" id="Q9HIN8">
    <property type="interactions" value="168"/>
</dbReference>
<dbReference type="STRING" id="273075.gene:9572520"/>
<dbReference type="PaxDb" id="273075-Ta1297"/>
<dbReference type="EnsemblBacteria" id="CAC12419">
    <property type="protein sequence ID" value="CAC12419"/>
    <property type="gene ID" value="CAC12419"/>
</dbReference>
<dbReference type="KEGG" id="tac:Ta1297"/>
<dbReference type="eggNOG" id="arCOG04129">
    <property type="taxonomic scope" value="Archaea"/>
</dbReference>
<dbReference type="HOGENOM" id="CLU_103610_1_1_2"/>
<dbReference type="InParanoid" id="Q9HIN8"/>
<dbReference type="OrthoDB" id="6295at2157"/>
<dbReference type="Proteomes" id="UP000001024">
    <property type="component" value="Chromosome"/>
</dbReference>
<dbReference type="GO" id="GO:1990904">
    <property type="term" value="C:ribonucleoprotein complex"/>
    <property type="evidence" value="ECO:0007669"/>
    <property type="project" value="UniProtKB-KW"/>
</dbReference>
<dbReference type="GO" id="GO:0005840">
    <property type="term" value="C:ribosome"/>
    <property type="evidence" value="ECO:0007669"/>
    <property type="project" value="UniProtKB-KW"/>
</dbReference>
<dbReference type="GO" id="GO:0003735">
    <property type="term" value="F:structural constituent of ribosome"/>
    <property type="evidence" value="ECO:0007669"/>
    <property type="project" value="InterPro"/>
</dbReference>
<dbReference type="GO" id="GO:0006412">
    <property type="term" value="P:translation"/>
    <property type="evidence" value="ECO:0007669"/>
    <property type="project" value="UniProtKB-UniRule"/>
</dbReference>
<dbReference type="Gene3D" id="2.30.30.70">
    <property type="entry name" value="Ribosomal protein L21"/>
    <property type="match status" value="1"/>
</dbReference>
<dbReference type="HAMAP" id="MF_00369">
    <property type="entry name" value="Ribosomal_eL21"/>
    <property type="match status" value="1"/>
</dbReference>
<dbReference type="InterPro" id="IPR001147">
    <property type="entry name" value="Ribosomal_eL21"/>
</dbReference>
<dbReference type="InterPro" id="IPR022856">
    <property type="entry name" value="Ribosomal_eL21_arc"/>
</dbReference>
<dbReference type="InterPro" id="IPR018259">
    <property type="entry name" value="Ribosomal_eL21_CS"/>
</dbReference>
<dbReference type="InterPro" id="IPR036948">
    <property type="entry name" value="Ribosomal_eL21_sf"/>
</dbReference>
<dbReference type="InterPro" id="IPR008991">
    <property type="entry name" value="Translation_prot_SH3-like_sf"/>
</dbReference>
<dbReference type="NCBIfam" id="NF003303">
    <property type="entry name" value="PRK04306.1"/>
    <property type="match status" value="1"/>
</dbReference>
<dbReference type="Pfam" id="PF01157">
    <property type="entry name" value="Ribosomal_L21e"/>
    <property type="match status" value="1"/>
</dbReference>
<dbReference type="SUPFAM" id="SSF50104">
    <property type="entry name" value="Translation proteins SH3-like domain"/>
    <property type="match status" value="1"/>
</dbReference>
<dbReference type="PROSITE" id="PS01171">
    <property type="entry name" value="RIBOSOMAL_L21E"/>
    <property type="match status" value="1"/>
</dbReference>
<reference key="1">
    <citation type="journal article" date="2000" name="Nature">
        <title>The genome sequence of the thermoacidophilic scavenger Thermoplasma acidophilum.</title>
        <authorList>
            <person name="Ruepp A."/>
            <person name="Graml W."/>
            <person name="Santos-Martinez M.-L."/>
            <person name="Koretke K.K."/>
            <person name="Volker C."/>
            <person name="Mewes H.-W."/>
            <person name="Frishman D."/>
            <person name="Stocker S."/>
            <person name="Lupas A.N."/>
            <person name="Baumeister W."/>
        </authorList>
    </citation>
    <scope>NUCLEOTIDE SEQUENCE [LARGE SCALE GENOMIC DNA]</scope>
    <source>
        <strain>ATCC 25905 / DSM 1728 / JCM 9062 / NBRC 15155 / AMRC-C165</strain>
    </source>
</reference>
<sequence length="98" mass="10958">MVKMSHGPRSGSRRKLTKSAEERKRSVIGRFMQEFEPGDRVAIDIEPSVHAGMPYHRFQGYTGVVEGPQGDCYKVAVKIDSLTKYVIASPVHLKKIKG</sequence>
<name>RL21_THEAC</name>
<accession>Q9HIN8</accession>
<comment type="similarity">
    <text evidence="2">Belongs to the eukaryotic ribosomal protein eL21 family.</text>
</comment>
<protein>
    <recommendedName>
        <fullName evidence="2">Large ribosomal subunit protein eL21</fullName>
    </recommendedName>
    <alternativeName>
        <fullName>50S ribosomal protein L21e</fullName>
    </alternativeName>
</protein>